<comment type="function">
    <text evidence="4">High-affinity S-adenosylmethionine permease, required for utilization of S-adenosylmethionine as a sulfur source.</text>
</comment>
<comment type="subcellular location">
    <subcellularLocation>
        <location evidence="5">Membrane</location>
        <topology evidence="5">Multi-pass membrane protein</topology>
    </subcellularLocation>
    <subcellularLocation>
        <location evidence="5">Endoplasmic reticulum</location>
    </subcellularLocation>
</comment>
<comment type="miscellaneous">
    <text evidence="6">Present with 1300 molecules/cell in log phase SD medium.</text>
</comment>
<comment type="similarity">
    <text evidence="7">Belongs to the amino acid-polyamine-organocation (APC) superfamily. YAT (TC 2.A.3.10) family.</text>
</comment>
<gene>
    <name type="primary">SAM3</name>
    <name type="ordered locus">YPL274W</name>
</gene>
<organism>
    <name type="scientific">Saccharomyces cerevisiae (strain ATCC 204508 / S288c)</name>
    <name type="common">Baker's yeast</name>
    <dbReference type="NCBI Taxonomy" id="559292"/>
    <lineage>
        <taxon>Eukaryota</taxon>
        <taxon>Fungi</taxon>
        <taxon>Dikarya</taxon>
        <taxon>Ascomycota</taxon>
        <taxon>Saccharomycotina</taxon>
        <taxon>Saccharomycetes</taxon>
        <taxon>Saccharomycetales</taxon>
        <taxon>Saccharomycetaceae</taxon>
        <taxon>Saccharomyces</taxon>
    </lineage>
</organism>
<evidence type="ECO:0000250" key="1">
    <source>
        <dbReference type="UniProtKB" id="Q12372"/>
    </source>
</evidence>
<evidence type="ECO:0000255" key="2"/>
<evidence type="ECO:0000256" key="3">
    <source>
        <dbReference type="SAM" id="MobiDB-lite"/>
    </source>
</evidence>
<evidence type="ECO:0000269" key="4">
    <source>
    </source>
</evidence>
<evidence type="ECO:0000269" key="5">
    <source>
    </source>
</evidence>
<evidence type="ECO:0000269" key="6">
    <source>
    </source>
</evidence>
<evidence type="ECO:0000305" key="7"/>
<evidence type="ECO:0007744" key="8">
    <source>
    </source>
</evidence>
<evidence type="ECO:0007744" key="9">
    <source>
    </source>
</evidence>
<keyword id="KW-0029">Amino-acid transport</keyword>
<keyword id="KW-0256">Endoplasmic reticulum</keyword>
<keyword id="KW-0325">Glycoprotein</keyword>
<keyword id="KW-0472">Membrane</keyword>
<keyword id="KW-0597">Phosphoprotein</keyword>
<keyword id="KW-1185">Reference proteome</keyword>
<keyword id="KW-0812">Transmembrane</keyword>
<keyword id="KW-1133">Transmembrane helix</keyword>
<keyword id="KW-0813">Transport</keyword>
<feature type="chain" id="PRO_0000054163" description="S-adenosylmethionine permease SAM3">
    <location>
        <begin position="1"/>
        <end position="587"/>
    </location>
</feature>
<feature type="topological domain" description="Cytoplasmic" evidence="2">
    <location>
        <begin position="1"/>
        <end position="80"/>
    </location>
</feature>
<feature type="transmembrane region" description="Helical" evidence="2">
    <location>
        <begin position="81"/>
        <end position="103"/>
    </location>
</feature>
<feature type="topological domain" description="Extracellular" evidence="2">
    <location>
        <begin position="104"/>
        <end position="109"/>
    </location>
</feature>
<feature type="transmembrane region" description="Helical" evidence="2">
    <location>
        <begin position="110"/>
        <end position="129"/>
    </location>
</feature>
<feature type="topological domain" description="Cytoplasmic" evidence="2">
    <location>
        <begin position="130"/>
        <end position="162"/>
    </location>
</feature>
<feature type="transmembrane region" description="Helical" evidence="2">
    <location>
        <begin position="163"/>
        <end position="183"/>
    </location>
</feature>
<feature type="topological domain" description="Extracellular" evidence="2">
    <location>
        <begin position="184"/>
        <end position="186"/>
    </location>
</feature>
<feature type="transmembrane region" description="Helical" evidence="2">
    <location>
        <begin position="187"/>
        <end position="207"/>
    </location>
</feature>
<feature type="topological domain" description="Cytoplasmic" evidence="2">
    <location>
        <begin position="208"/>
        <end position="219"/>
    </location>
</feature>
<feature type="transmembrane region" description="Helical" evidence="2">
    <location>
        <begin position="220"/>
        <end position="240"/>
    </location>
</feature>
<feature type="topological domain" description="Extracellular" evidence="2">
    <location>
        <begin position="241"/>
        <end position="266"/>
    </location>
</feature>
<feature type="transmembrane region" description="Helical" evidence="2">
    <location>
        <begin position="267"/>
        <end position="287"/>
    </location>
</feature>
<feature type="topological domain" description="Cytoplasmic" evidence="2">
    <location>
        <begin position="288"/>
        <end position="302"/>
    </location>
</feature>
<feature type="transmembrane region" description="Helical" evidence="2">
    <location>
        <begin position="303"/>
        <end position="323"/>
    </location>
</feature>
<feature type="topological domain" description="Extracellular" evidence="2">
    <location>
        <begin position="324"/>
        <end position="360"/>
    </location>
</feature>
<feature type="transmembrane region" description="Helical" evidence="2">
    <location>
        <begin position="361"/>
        <end position="381"/>
    </location>
</feature>
<feature type="topological domain" description="Cytoplasmic" evidence="2">
    <location>
        <begin position="382"/>
        <end position="406"/>
    </location>
</feature>
<feature type="transmembrane region" description="Helical" evidence="2">
    <location>
        <begin position="407"/>
        <end position="427"/>
    </location>
</feature>
<feature type="topological domain" description="Extracellular" evidence="2">
    <location>
        <begin position="428"/>
        <end position="431"/>
    </location>
</feature>
<feature type="transmembrane region" description="Helical" evidence="2">
    <location>
        <begin position="432"/>
        <end position="452"/>
    </location>
</feature>
<feature type="topological domain" description="Cytoplasmic" evidence="2">
    <location>
        <begin position="453"/>
        <end position="475"/>
    </location>
</feature>
<feature type="transmembrane region" description="Helical" evidence="2">
    <location>
        <begin position="476"/>
        <end position="496"/>
    </location>
</feature>
<feature type="topological domain" description="Extracellular" evidence="2">
    <location>
        <begin position="497"/>
        <end position="509"/>
    </location>
</feature>
<feature type="transmembrane region" description="Helical" evidence="2">
    <location>
        <begin position="510"/>
        <end position="530"/>
    </location>
</feature>
<feature type="topological domain" description="Cytoplasmic" evidence="2">
    <location>
        <begin position="531"/>
        <end position="587"/>
    </location>
</feature>
<feature type="region of interest" description="Disordered" evidence="3">
    <location>
        <begin position="1"/>
        <end position="31"/>
    </location>
</feature>
<feature type="compositionally biased region" description="Basic and acidic residues" evidence="3">
    <location>
        <begin position="1"/>
        <end position="18"/>
    </location>
</feature>
<feature type="modified residue" description="Phosphoserine" evidence="8">
    <location>
        <position position="10"/>
    </location>
</feature>
<feature type="modified residue" description="Phosphoserine" evidence="1">
    <location>
        <position position="27"/>
    </location>
</feature>
<feature type="modified residue" description="Phosphoserine" evidence="9">
    <location>
        <position position="44"/>
    </location>
</feature>
<feature type="glycosylation site" description="N-linked (GlcNAc...) asparagine" evidence="2">
    <location>
        <position position="184"/>
    </location>
</feature>
<feature type="glycosylation site" description="N-linked (GlcNAc...) asparagine" evidence="2">
    <location>
        <position position="243"/>
    </location>
</feature>
<reference key="1">
    <citation type="journal article" date="1997" name="Nature">
        <title>The nucleotide sequence of Saccharomyces cerevisiae chromosome XVI.</title>
        <authorList>
            <person name="Bussey H."/>
            <person name="Storms R.K."/>
            <person name="Ahmed A."/>
            <person name="Albermann K."/>
            <person name="Allen E."/>
            <person name="Ansorge W."/>
            <person name="Araujo R."/>
            <person name="Aparicio A."/>
            <person name="Barrell B.G."/>
            <person name="Badcock K."/>
            <person name="Benes V."/>
            <person name="Botstein D."/>
            <person name="Bowman S."/>
            <person name="Brueckner M."/>
            <person name="Carpenter J."/>
            <person name="Cherry J.M."/>
            <person name="Chung E."/>
            <person name="Churcher C.M."/>
            <person name="Coster F."/>
            <person name="Davis K."/>
            <person name="Davis R.W."/>
            <person name="Dietrich F.S."/>
            <person name="Delius H."/>
            <person name="DiPaolo T."/>
            <person name="Dubois E."/>
            <person name="Duesterhoeft A."/>
            <person name="Duncan M."/>
            <person name="Floeth M."/>
            <person name="Fortin N."/>
            <person name="Friesen J.D."/>
            <person name="Fritz C."/>
            <person name="Goffeau A."/>
            <person name="Hall J."/>
            <person name="Hebling U."/>
            <person name="Heumann K."/>
            <person name="Hilbert H."/>
            <person name="Hillier L.W."/>
            <person name="Hunicke-Smith S."/>
            <person name="Hyman R.W."/>
            <person name="Johnston M."/>
            <person name="Kalman S."/>
            <person name="Kleine K."/>
            <person name="Komp C."/>
            <person name="Kurdi O."/>
            <person name="Lashkari D."/>
            <person name="Lew H."/>
            <person name="Lin A."/>
            <person name="Lin D."/>
            <person name="Louis E.J."/>
            <person name="Marathe R."/>
            <person name="Messenguy F."/>
            <person name="Mewes H.-W."/>
            <person name="Mirtipati S."/>
            <person name="Moestl D."/>
            <person name="Mueller-Auer S."/>
            <person name="Namath A."/>
            <person name="Nentwich U."/>
            <person name="Oefner P."/>
            <person name="Pearson D."/>
            <person name="Petel F.X."/>
            <person name="Pohl T.M."/>
            <person name="Purnelle B."/>
            <person name="Rajandream M.A."/>
            <person name="Rechmann S."/>
            <person name="Rieger M."/>
            <person name="Riles L."/>
            <person name="Roberts D."/>
            <person name="Schaefer M."/>
            <person name="Scharfe M."/>
            <person name="Scherens B."/>
            <person name="Schramm S."/>
            <person name="Schroeder M."/>
            <person name="Sdicu A.-M."/>
            <person name="Tettelin H."/>
            <person name="Urrestarazu L.A."/>
            <person name="Ushinsky S."/>
            <person name="Vierendeels F."/>
            <person name="Vissers S."/>
            <person name="Voss H."/>
            <person name="Walsh S.V."/>
            <person name="Wambutt R."/>
            <person name="Wang Y."/>
            <person name="Wedler E."/>
            <person name="Wedler H."/>
            <person name="Winnett E."/>
            <person name="Zhong W.-W."/>
            <person name="Zollner A."/>
            <person name="Vo D.H."/>
            <person name="Hani J."/>
        </authorList>
    </citation>
    <scope>NUCLEOTIDE SEQUENCE [LARGE SCALE GENOMIC DNA]</scope>
    <source>
        <strain>ATCC 204508 / S288c</strain>
    </source>
</reference>
<reference key="2">
    <citation type="journal article" date="2014" name="G3 (Bethesda)">
        <title>The reference genome sequence of Saccharomyces cerevisiae: Then and now.</title>
        <authorList>
            <person name="Engel S.R."/>
            <person name="Dietrich F.S."/>
            <person name="Fisk D.G."/>
            <person name="Binkley G."/>
            <person name="Balakrishnan R."/>
            <person name="Costanzo M.C."/>
            <person name="Dwight S.S."/>
            <person name="Hitz B.C."/>
            <person name="Karra K."/>
            <person name="Nash R.S."/>
            <person name="Weng S."/>
            <person name="Wong E.D."/>
            <person name="Lloyd P."/>
            <person name="Skrzypek M.S."/>
            <person name="Miyasato S.R."/>
            <person name="Simison M."/>
            <person name="Cherry J.M."/>
        </authorList>
    </citation>
    <scope>GENOME REANNOTATION</scope>
    <source>
        <strain>ATCC 204508 / S288c</strain>
    </source>
</reference>
<reference key="3">
    <citation type="journal article" date="1999" name="J. Biol. Chem.">
        <title>Transport of sulfonium compounds. Characterization of the s-adenosylmethionine and s-methylmethionine permeases from the yeast Saccharomyces cerevisiae.</title>
        <authorList>
            <person name="Rouillon A."/>
            <person name="Surdin-Kerjan Y."/>
            <person name="Thomas D."/>
        </authorList>
    </citation>
    <scope>FUNCTION</scope>
</reference>
<reference key="4">
    <citation type="journal article" date="2003" name="Nature">
        <title>Global analysis of protein localization in budding yeast.</title>
        <authorList>
            <person name="Huh W.-K."/>
            <person name="Falvo J.V."/>
            <person name="Gerke L.C."/>
            <person name="Carroll A.S."/>
            <person name="Howson R.W."/>
            <person name="Weissman J.S."/>
            <person name="O'Shea E.K."/>
        </authorList>
    </citation>
    <scope>SUBCELLULAR LOCATION [LARGE SCALE ANALYSIS]</scope>
</reference>
<reference key="5">
    <citation type="journal article" date="2003" name="Nature">
        <title>Global analysis of protein expression in yeast.</title>
        <authorList>
            <person name="Ghaemmaghami S."/>
            <person name="Huh W.-K."/>
            <person name="Bower K."/>
            <person name="Howson R.W."/>
            <person name="Belle A."/>
            <person name="Dephoure N."/>
            <person name="O'Shea E.K."/>
            <person name="Weissman J.S."/>
        </authorList>
    </citation>
    <scope>LEVEL OF PROTEIN EXPRESSION [LARGE SCALE ANALYSIS]</scope>
</reference>
<reference key="6">
    <citation type="journal article" date="2005" name="Mol. Cell. Proteomics">
        <title>Quantitative phosphoproteomics applied to the yeast pheromone signaling pathway.</title>
        <authorList>
            <person name="Gruhler A."/>
            <person name="Olsen J.V."/>
            <person name="Mohammed S."/>
            <person name="Mortensen P."/>
            <person name="Faergeman N.J."/>
            <person name="Mann M."/>
            <person name="Jensen O.N."/>
        </authorList>
    </citation>
    <scope>PHOSPHORYLATION [LARGE SCALE ANALYSIS] AT SER-10</scope>
    <scope>IDENTIFICATION BY MASS SPECTROMETRY [LARGE SCALE ANALYSIS]</scope>
    <source>
        <strain>YAL6B</strain>
    </source>
</reference>
<reference key="7">
    <citation type="journal article" date="2006" name="Proc. Natl. Acad. Sci. U.S.A.">
        <title>A global topology map of the Saccharomyces cerevisiae membrane proteome.</title>
        <authorList>
            <person name="Kim H."/>
            <person name="Melen K."/>
            <person name="Oesterberg M."/>
            <person name="von Heijne G."/>
        </authorList>
    </citation>
    <scope>TOPOLOGY [LARGE SCALE ANALYSIS]</scope>
    <source>
        <strain>ATCC 208353 / W303-1A</strain>
    </source>
</reference>
<reference key="8">
    <citation type="journal article" date="2009" name="Science">
        <title>Global analysis of Cdk1 substrate phosphorylation sites provides insights into evolution.</title>
        <authorList>
            <person name="Holt L.J."/>
            <person name="Tuch B.B."/>
            <person name="Villen J."/>
            <person name="Johnson A.D."/>
            <person name="Gygi S.P."/>
            <person name="Morgan D.O."/>
        </authorList>
    </citation>
    <scope>PHOSPHORYLATION [LARGE SCALE ANALYSIS] AT SER-44</scope>
    <scope>IDENTIFICATION BY MASS SPECTROMETRY [LARGE SCALE ANALYSIS]</scope>
</reference>
<name>SAM3_YEAST</name>
<sequence>MDILKRGNESDKFTKIETESTTIPNDSDRSGSLIRRMKDSFKQSNLHVIPEDLENSEQTEQEKIQWKLASQPYQKVLSQRHLTMIAIGGTLGTGLFIGLGYSLASGPAALLIGFLLVGTSMFCVVQSAAELSCQFPVSGSYATHVSRFIDESVGFTVATNYALAWLISFPSELIGCALTISYWNQTVNPAVWVAIFYVFIMVLNLFGVRGFAETEFALSIIKVIAIFIFIIIGIVLIAGGGPNSTGYIGAKYWHDPGAFAKPVFKNLCNTFVSAAFSFGGSELVLLTSTESKNISAISRAAKGTFWRIAIFYITTVVIIGCLVPYNDPRLLSGSNSEDVSASPFVIALSNTGSMGAKVSNFMNVVILVAVVSVCNSCVYASSRLIQALGASGQLPSVCSYMDRKGRPLVGIGISGAFGLLGFLVASKKEDEVFTWLFALCSISSFFTWFCICMSQIRFRMALKAQGRSNDEIAYKSILGVYGGILGCVLNALLIAGEIYVSAAPVGSPSSAEAFFEYCLSIPIMIVVYFAHRFYRRDWKHFYIKRSEIDLDTGCSVENLELFKAQKEAEEQLIASKPFYYKIYRFWC</sequence>
<protein>
    <recommendedName>
        <fullName>S-adenosylmethionine permease SAM3</fullName>
    </recommendedName>
    <alternativeName>
        <fullName>S-adenosylmethionine metabolism protein 3</fullName>
    </alternativeName>
</protein>
<proteinExistence type="evidence at protein level"/>
<accession>Q08986</accession>
<accession>D6W396</accession>
<accession>Q7LGU1</accession>
<dbReference type="EMBL" id="Z73629">
    <property type="protein sequence ID" value="CAA98010.1"/>
    <property type="molecule type" value="Genomic_DNA"/>
</dbReference>
<dbReference type="EMBL" id="Z73630">
    <property type="protein sequence ID" value="CAA98011.1"/>
    <property type="molecule type" value="Genomic_DNA"/>
</dbReference>
<dbReference type="EMBL" id="BK006949">
    <property type="protein sequence ID" value="DAA11162.1"/>
    <property type="molecule type" value="Genomic_DNA"/>
</dbReference>
<dbReference type="PIR" id="S65307">
    <property type="entry name" value="S65307"/>
</dbReference>
<dbReference type="RefSeq" id="NP_015049.1">
    <property type="nucleotide sequence ID" value="NM_001184088.1"/>
</dbReference>
<dbReference type="SMR" id="Q08986"/>
<dbReference type="BioGRID" id="35939">
    <property type="interactions" value="77"/>
</dbReference>
<dbReference type="DIP" id="DIP-8874N"/>
<dbReference type="FunCoup" id="Q08986">
    <property type="interactions" value="249"/>
</dbReference>
<dbReference type="STRING" id="4932.YPL274W"/>
<dbReference type="TCDB" id="2.A.3.10.15">
    <property type="family name" value="the amino acid-polyamine-organocation (apc) family"/>
</dbReference>
<dbReference type="GlyCosmos" id="Q08986">
    <property type="glycosylation" value="2 sites, No reported glycans"/>
</dbReference>
<dbReference type="GlyGen" id="Q08986">
    <property type="glycosylation" value="2 sites"/>
</dbReference>
<dbReference type="iPTMnet" id="Q08986"/>
<dbReference type="SwissPalm" id="Q08986"/>
<dbReference type="PaxDb" id="4932-YPL274W"/>
<dbReference type="PeptideAtlas" id="Q08986"/>
<dbReference type="EnsemblFungi" id="YPL274W_mRNA">
    <property type="protein sequence ID" value="YPL274W"/>
    <property type="gene ID" value="YPL274W"/>
</dbReference>
<dbReference type="GeneID" id="855854"/>
<dbReference type="KEGG" id="sce:YPL274W"/>
<dbReference type="AGR" id="SGD:S000006195"/>
<dbReference type="SGD" id="S000006195">
    <property type="gene designation" value="SAM3"/>
</dbReference>
<dbReference type="VEuPathDB" id="FungiDB:YPL274W"/>
<dbReference type="eggNOG" id="KOG1286">
    <property type="taxonomic scope" value="Eukaryota"/>
</dbReference>
<dbReference type="GeneTree" id="ENSGT00940000176823"/>
<dbReference type="HOGENOM" id="CLU_007946_12_0_1"/>
<dbReference type="InParanoid" id="Q08986"/>
<dbReference type="OMA" id="CLSIPIM"/>
<dbReference type="OrthoDB" id="3900342at2759"/>
<dbReference type="BioCyc" id="YEAST:G3O-34155-MONOMER"/>
<dbReference type="BioGRID-ORCS" id="855854">
    <property type="hits" value="1 hit in 10 CRISPR screens"/>
</dbReference>
<dbReference type="PRO" id="PR:Q08986"/>
<dbReference type="Proteomes" id="UP000002311">
    <property type="component" value="Chromosome XVI"/>
</dbReference>
<dbReference type="RNAct" id="Q08986">
    <property type="molecule type" value="protein"/>
</dbReference>
<dbReference type="GO" id="GO:0005783">
    <property type="term" value="C:endoplasmic reticulum"/>
    <property type="evidence" value="ECO:0007005"/>
    <property type="project" value="SGD"/>
</dbReference>
<dbReference type="GO" id="GO:0016020">
    <property type="term" value="C:membrane"/>
    <property type="evidence" value="ECO:0000318"/>
    <property type="project" value="GO_Central"/>
</dbReference>
<dbReference type="GO" id="GO:0005886">
    <property type="term" value="C:plasma membrane"/>
    <property type="evidence" value="ECO:0000314"/>
    <property type="project" value="SGD"/>
</dbReference>
<dbReference type="GO" id="GO:0015171">
    <property type="term" value="F:amino acid transmembrane transporter activity"/>
    <property type="evidence" value="ECO:0000318"/>
    <property type="project" value="GO_Central"/>
</dbReference>
<dbReference type="GO" id="GO:0015489">
    <property type="term" value="F:putrescine transmembrane transporter activity"/>
    <property type="evidence" value="ECO:0000314"/>
    <property type="project" value="SGD"/>
</dbReference>
<dbReference type="GO" id="GO:0000095">
    <property type="term" value="F:S-adenosyl-L-methionine transmembrane transporter activity"/>
    <property type="evidence" value="ECO:0000315"/>
    <property type="project" value="SGD"/>
</dbReference>
<dbReference type="GO" id="GO:0015606">
    <property type="term" value="F:spermidine transmembrane transporter activity"/>
    <property type="evidence" value="ECO:0000314"/>
    <property type="project" value="SGD"/>
</dbReference>
<dbReference type="GO" id="GO:0003333">
    <property type="term" value="P:amino acid transmembrane transport"/>
    <property type="evidence" value="ECO:0000318"/>
    <property type="project" value="GO_Central"/>
</dbReference>
<dbReference type="GO" id="GO:0015847">
    <property type="term" value="P:putrescine transport"/>
    <property type="evidence" value="ECO:0000314"/>
    <property type="project" value="SGD"/>
</dbReference>
<dbReference type="GO" id="GO:0015805">
    <property type="term" value="P:S-adenosyl-L-methionine transport"/>
    <property type="evidence" value="ECO:0000315"/>
    <property type="project" value="SGD"/>
</dbReference>
<dbReference type="GO" id="GO:0015848">
    <property type="term" value="P:spermidine transport"/>
    <property type="evidence" value="ECO:0000314"/>
    <property type="project" value="SGD"/>
</dbReference>
<dbReference type="FunFam" id="1.20.1740.10:FF:000060">
    <property type="entry name" value="S-methylmethionine permease"/>
    <property type="match status" value="1"/>
</dbReference>
<dbReference type="Gene3D" id="1.20.1740.10">
    <property type="entry name" value="Amino acid/polyamine transporter I"/>
    <property type="match status" value="1"/>
</dbReference>
<dbReference type="InterPro" id="IPR004841">
    <property type="entry name" value="AA-permease/SLC12A_dom"/>
</dbReference>
<dbReference type="InterPro" id="IPR004840">
    <property type="entry name" value="Amino_acid_permease_CS"/>
</dbReference>
<dbReference type="InterPro" id="IPR004762">
    <property type="entry name" value="Amino_acid_permease_fungi"/>
</dbReference>
<dbReference type="InterPro" id="IPR050524">
    <property type="entry name" value="APC_YAT"/>
</dbReference>
<dbReference type="NCBIfam" id="TIGR00913">
    <property type="entry name" value="2A0310"/>
    <property type="match status" value="1"/>
</dbReference>
<dbReference type="PANTHER" id="PTHR43341">
    <property type="entry name" value="AMINO ACID PERMEASE"/>
    <property type="match status" value="1"/>
</dbReference>
<dbReference type="PANTHER" id="PTHR43341:SF10">
    <property type="entry name" value="S-ADENOSYLMETHIONINE PERMEASE SAM3-RELATED"/>
    <property type="match status" value="1"/>
</dbReference>
<dbReference type="Pfam" id="PF00324">
    <property type="entry name" value="AA_permease"/>
    <property type="match status" value="1"/>
</dbReference>
<dbReference type="PIRSF" id="PIRSF006060">
    <property type="entry name" value="AA_transporter"/>
    <property type="match status" value="1"/>
</dbReference>
<dbReference type="PROSITE" id="PS00218">
    <property type="entry name" value="AMINO_ACID_PERMEASE_1"/>
    <property type="match status" value="1"/>
</dbReference>